<proteinExistence type="evidence at protein level"/>
<keyword id="KW-0002">3D-structure</keyword>
<keyword id="KW-0122">Cardiomyopathy</keyword>
<keyword id="KW-0225">Disease variant</keyword>
<keyword id="KW-1017">Isopeptide bond</keyword>
<keyword id="KW-0479">Metal-binding</keyword>
<keyword id="KW-0539">Nucleus</keyword>
<keyword id="KW-1267">Proteomics identification</keyword>
<keyword id="KW-1185">Reference proteome</keyword>
<keyword id="KW-0832">Ubl conjugation</keyword>
<keyword id="KW-0862">Zinc</keyword>
<keyword id="KW-0863">Zinc-finger</keyword>
<reference key="1">
    <citation type="journal article" date="2004" name="Nat. Genet.">
        <title>Complete sequencing and characterization of 21,243 full-length human cDNAs.</title>
        <authorList>
            <person name="Ota T."/>
            <person name="Suzuki Y."/>
            <person name="Nishikawa T."/>
            <person name="Otsuki T."/>
            <person name="Sugiyama T."/>
            <person name="Irie R."/>
            <person name="Wakamatsu A."/>
            <person name="Hayashi K."/>
            <person name="Sato H."/>
            <person name="Nagai K."/>
            <person name="Kimura K."/>
            <person name="Makita H."/>
            <person name="Sekine M."/>
            <person name="Obayashi M."/>
            <person name="Nishi T."/>
            <person name="Shibahara T."/>
            <person name="Tanaka T."/>
            <person name="Ishii S."/>
            <person name="Yamamoto J."/>
            <person name="Saito K."/>
            <person name="Kawai Y."/>
            <person name="Isono Y."/>
            <person name="Nakamura Y."/>
            <person name="Nagahari K."/>
            <person name="Murakami K."/>
            <person name="Yasuda T."/>
            <person name="Iwayanagi T."/>
            <person name="Wagatsuma M."/>
            <person name="Shiratori A."/>
            <person name="Sudo H."/>
            <person name="Hosoiri T."/>
            <person name="Kaku Y."/>
            <person name="Kodaira H."/>
            <person name="Kondo H."/>
            <person name="Sugawara M."/>
            <person name="Takahashi M."/>
            <person name="Kanda K."/>
            <person name="Yokoi T."/>
            <person name="Furuya T."/>
            <person name="Kikkawa E."/>
            <person name="Omura Y."/>
            <person name="Abe K."/>
            <person name="Kamihara K."/>
            <person name="Katsuta N."/>
            <person name="Sato K."/>
            <person name="Tanikawa M."/>
            <person name="Yamazaki M."/>
            <person name="Ninomiya K."/>
            <person name="Ishibashi T."/>
            <person name="Yamashita H."/>
            <person name="Murakawa K."/>
            <person name="Fujimori K."/>
            <person name="Tanai H."/>
            <person name="Kimata M."/>
            <person name="Watanabe M."/>
            <person name="Hiraoka S."/>
            <person name="Chiba Y."/>
            <person name="Ishida S."/>
            <person name="Ono Y."/>
            <person name="Takiguchi S."/>
            <person name="Watanabe S."/>
            <person name="Yosida M."/>
            <person name="Hotuta T."/>
            <person name="Kusano J."/>
            <person name="Kanehori K."/>
            <person name="Takahashi-Fujii A."/>
            <person name="Hara H."/>
            <person name="Tanase T.-O."/>
            <person name="Nomura Y."/>
            <person name="Togiya S."/>
            <person name="Komai F."/>
            <person name="Hara R."/>
            <person name="Takeuchi K."/>
            <person name="Arita M."/>
            <person name="Imose N."/>
            <person name="Musashino K."/>
            <person name="Yuuki H."/>
            <person name="Oshima A."/>
            <person name="Sasaki N."/>
            <person name="Aotsuka S."/>
            <person name="Yoshikawa Y."/>
            <person name="Matsunawa H."/>
            <person name="Ichihara T."/>
            <person name="Shiohata N."/>
            <person name="Sano S."/>
            <person name="Moriya S."/>
            <person name="Momiyama H."/>
            <person name="Satoh N."/>
            <person name="Takami S."/>
            <person name="Terashima Y."/>
            <person name="Suzuki O."/>
            <person name="Nakagawa S."/>
            <person name="Senoh A."/>
            <person name="Mizoguchi H."/>
            <person name="Goto Y."/>
            <person name="Shimizu F."/>
            <person name="Wakebe H."/>
            <person name="Hishigaki H."/>
            <person name="Watanabe T."/>
            <person name="Sugiyama A."/>
            <person name="Takemoto M."/>
            <person name="Kawakami B."/>
            <person name="Yamazaki M."/>
            <person name="Watanabe K."/>
            <person name="Kumagai A."/>
            <person name="Itakura S."/>
            <person name="Fukuzumi Y."/>
            <person name="Fujimori Y."/>
            <person name="Komiyama M."/>
            <person name="Tashiro H."/>
            <person name="Tanigami A."/>
            <person name="Fujiwara T."/>
            <person name="Ono T."/>
            <person name="Yamada K."/>
            <person name="Fujii Y."/>
            <person name="Ozaki K."/>
            <person name="Hirao M."/>
            <person name="Ohmori Y."/>
            <person name="Kawabata A."/>
            <person name="Hikiji T."/>
            <person name="Kobatake N."/>
            <person name="Inagaki H."/>
            <person name="Ikema Y."/>
            <person name="Okamoto S."/>
            <person name="Okitani R."/>
            <person name="Kawakami T."/>
            <person name="Noguchi S."/>
            <person name="Itoh T."/>
            <person name="Shigeta K."/>
            <person name="Senba T."/>
            <person name="Matsumura K."/>
            <person name="Nakajima Y."/>
            <person name="Mizuno T."/>
            <person name="Morinaga M."/>
            <person name="Sasaki M."/>
            <person name="Togashi T."/>
            <person name="Oyama M."/>
            <person name="Hata H."/>
            <person name="Watanabe M."/>
            <person name="Komatsu T."/>
            <person name="Mizushima-Sugano J."/>
            <person name="Satoh T."/>
            <person name="Shirai Y."/>
            <person name="Takahashi Y."/>
            <person name="Nakagawa K."/>
            <person name="Okumura K."/>
            <person name="Nagase T."/>
            <person name="Nomura N."/>
            <person name="Kikuchi H."/>
            <person name="Masuho Y."/>
            <person name="Yamashita R."/>
            <person name="Nakai K."/>
            <person name="Yada T."/>
            <person name="Nakamura Y."/>
            <person name="Ohara O."/>
            <person name="Isogai T."/>
            <person name="Sugano S."/>
        </authorList>
    </citation>
    <scope>NUCLEOTIDE SEQUENCE [LARGE SCALE MRNA]</scope>
    <source>
        <tissue>Trachea</tissue>
    </source>
</reference>
<reference key="2">
    <citation type="journal article" date="2003" name="Nature">
        <title>The DNA sequence of human chromosome 7.</title>
        <authorList>
            <person name="Hillier L.W."/>
            <person name="Fulton R.S."/>
            <person name="Fulton L.A."/>
            <person name="Graves T.A."/>
            <person name="Pepin K.H."/>
            <person name="Wagner-McPherson C."/>
            <person name="Layman D."/>
            <person name="Maas J."/>
            <person name="Jaeger S."/>
            <person name="Walker R."/>
            <person name="Wylie K."/>
            <person name="Sekhon M."/>
            <person name="Becker M.C."/>
            <person name="O'Laughlin M.D."/>
            <person name="Schaller M.E."/>
            <person name="Fewell G.A."/>
            <person name="Delehaunty K.D."/>
            <person name="Miner T.L."/>
            <person name="Nash W.E."/>
            <person name="Cordes M."/>
            <person name="Du H."/>
            <person name="Sun H."/>
            <person name="Edwards J."/>
            <person name="Bradshaw-Cordum H."/>
            <person name="Ali J."/>
            <person name="Andrews S."/>
            <person name="Isak A."/>
            <person name="Vanbrunt A."/>
            <person name="Nguyen C."/>
            <person name="Du F."/>
            <person name="Lamar B."/>
            <person name="Courtney L."/>
            <person name="Kalicki J."/>
            <person name="Ozersky P."/>
            <person name="Bielicki L."/>
            <person name="Scott K."/>
            <person name="Holmes A."/>
            <person name="Harkins R."/>
            <person name="Harris A."/>
            <person name="Strong C.M."/>
            <person name="Hou S."/>
            <person name="Tomlinson C."/>
            <person name="Dauphin-Kohlberg S."/>
            <person name="Kozlowicz-Reilly A."/>
            <person name="Leonard S."/>
            <person name="Rohlfing T."/>
            <person name="Rock S.M."/>
            <person name="Tin-Wollam A.-M."/>
            <person name="Abbott A."/>
            <person name="Minx P."/>
            <person name="Maupin R."/>
            <person name="Strowmatt C."/>
            <person name="Latreille P."/>
            <person name="Miller N."/>
            <person name="Johnson D."/>
            <person name="Murray J."/>
            <person name="Woessner J.P."/>
            <person name="Wendl M.C."/>
            <person name="Yang S.-P."/>
            <person name="Schultz B.R."/>
            <person name="Wallis J.W."/>
            <person name="Spieth J."/>
            <person name="Bieri T.A."/>
            <person name="Nelson J.O."/>
            <person name="Berkowicz N."/>
            <person name="Wohldmann P.E."/>
            <person name="Cook L.L."/>
            <person name="Hickenbotham M.T."/>
            <person name="Eldred J."/>
            <person name="Williams D."/>
            <person name="Bedell J.A."/>
            <person name="Mardis E.R."/>
            <person name="Clifton S.W."/>
            <person name="Chissoe S.L."/>
            <person name="Marra M.A."/>
            <person name="Raymond C."/>
            <person name="Haugen E."/>
            <person name="Gillett W."/>
            <person name="Zhou Y."/>
            <person name="James R."/>
            <person name="Phelps K."/>
            <person name="Iadanoto S."/>
            <person name="Bubb K."/>
            <person name="Simms E."/>
            <person name="Levy R."/>
            <person name="Clendenning J."/>
            <person name="Kaul R."/>
            <person name="Kent W.J."/>
            <person name="Furey T.S."/>
            <person name="Baertsch R.A."/>
            <person name="Brent M.R."/>
            <person name="Keibler E."/>
            <person name="Flicek P."/>
            <person name="Bork P."/>
            <person name="Suyama M."/>
            <person name="Bailey J.A."/>
            <person name="Portnoy M.E."/>
            <person name="Torrents D."/>
            <person name="Chinwalla A.T."/>
            <person name="Gish W.R."/>
            <person name="Eddy S.R."/>
            <person name="McPherson J.D."/>
            <person name="Olson M.V."/>
            <person name="Eichler E.E."/>
            <person name="Green E.D."/>
            <person name="Waterston R.H."/>
            <person name="Wilson R.K."/>
        </authorList>
    </citation>
    <scope>NUCLEOTIDE SEQUENCE [LARGE SCALE GENOMIC DNA]</scope>
</reference>
<reference key="3">
    <citation type="journal article" date="2003" name="Science">
        <title>Human chromosome 7: DNA sequence and biology.</title>
        <authorList>
            <person name="Scherer S.W."/>
            <person name="Cheung J."/>
            <person name="MacDonald J.R."/>
            <person name="Osborne L.R."/>
            <person name="Nakabayashi K."/>
            <person name="Herbrick J.-A."/>
            <person name="Carson A.R."/>
            <person name="Parker-Katiraee L."/>
            <person name="Skaug J."/>
            <person name="Khaja R."/>
            <person name="Zhang J."/>
            <person name="Hudek A.K."/>
            <person name="Li M."/>
            <person name="Haddad M."/>
            <person name="Duggan G.E."/>
            <person name="Fernandez B.A."/>
            <person name="Kanematsu E."/>
            <person name="Gentles S."/>
            <person name="Christopoulos C.C."/>
            <person name="Choufani S."/>
            <person name="Kwasnicka D."/>
            <person name="Zheng X.H."/>
            <person name="Lai Z."/>
            <person name="Nusskern D.R."/>
            <person name="Zhang Q."/>
            <person name="Gu Z."/>
            <person name="Lu F."/>
            <person name="Zeesman S."/>
            <person name="Nowaczyk M.J."/>
            <person name="Teshima I."/>
            <person name="Chitayat D."/>
            <person name="Shuman C."/>
            <person name="Weksberg R."/>
            <person name="Zackai E.H."/>
            <person name="Grebe T.A."/>
            <person name="Cox S.R."/>
            <person name="Kirkpatrick S.J."/>
            <person name="Rahman N."/>
            <person name="Friedman J.M."/>
            <person name="Heng H.H.Q."/>
            <person name="Pelicci P.G."/>
            <person name="Lo-Coco F."/>
            <person name="Belloni E."/>
            <person name="Shaffer L.G."/>
            <person name="Pober B."/>
            <person name="Morton C.C."/>
            <person name="Gusella J.F."/>
            <person name="Bruns G.A.P."/>
            <person name="Korf B.R."/>
            <person name="Quade B.J."/>
            <person name="Ligon A.H."/>
            <person name="Ferguson H."/>
            <person name="Higgins A.W."/>
            <person name="Leach N.T."/>
            <person name="Herrick S.R."/>
            <person name="Lemyre E."/>
            <person name="Farra C.G."/>
            <person name="Kim H.-G."/>
            <person name="Summers A.M."/>
            <person name="Gripp K.W."/>
            <person name="Roberts W."/>
            <person name="Szatmari P."/>
            <person name="Winsor E.J.T."/>
            <person name="Grzeschik K.-H."/>
            <person name="Teebi A."/>
            <person name="Minassian B.A."/>
            <person name="Kere J."/>
            <person name="Armengol L."/>
            <person name="Pujana M.A."/>
            <person name="Estivill X."/>
            <person name="Wilson M.D."/>
            <person name="Koop B.F."/>
            <person name="Tosi S."/>
            <person name="Moore G.E."/>
            <person name="Boright A.P."/>
            <person name="Zlotorynski E."/>
            <person name="Kerem B."/>
            <person name="Kroisel P.M."/>
            <person name="Petek E."/>
            <person name="Oscier D.G."/>
            <person name="Mould S.J."/>
            <person name="Doehner H."/>
            <person name="Doehner K."/>
            <person name="Rommens J.M."/>
            <person name="Vincent J.B."/>
            <person name="Venter J.C."/>
            <person name="Li P.W."/>
            <person name="Mural R.J."/>
            <person name="Adams M.D."/>
            <person name="Tsui L.-C."/>
        </authorList>
    </citation>
    <scope>NUCLEOTIDE SEQUENCE [LARGE SCALE GENOMIC DNA]</scope>
</reference>
<reference key="4">
    <citation type="submission" date="2005-09" db="EMBL/GenBank/DDBJ databases">
        <authorList>
            <person name="Mural R.J."/>
            <person name="Istrail S."/>
            <person name="Sutton G.G."/>
            <person name="Florea L."/>
            <person name="Halpern A.L."/>
            <person name="Mobarry C.M."/>
            <person name="Lippert R."/>
            <person name="Walenz B."/>
            <person name="Shatkay H."/>
            <person name="Dew I."/>
            <person name="Miller J.R."/>
            <person name="Flanigan M.J."/>
            <person name="Edwards N.J."/>
            <person name="Bolanos R."/>
            <person name="Fasulo D."/>
            <person name="Halldorsson B.V."/>
            <person name="Hannenhalli S."/>
            <person name="Turner R."/>
            <person name="Yooseph S."/>
            <person name="Lu F."/>
            <person name="Nusskern D.R."/>
            <person name="Shue B.C."/>
            <person name="Zheng X.H."/>
            <person name="Zhong F."/>
            <person name="Delcher A.L."/>
            <person name="Huson D.H."/>
            <person name="Kravitz S.A."/>
            <person name="Mouchard L."/>
            <person name="Reinert K."/>
            <person name="Remington K.A."/>
            <person name="Clark A.G."/>
            <person name="Waterman M.S."/>
            <person name="Eichler E.E."/>
            <person name="Adams M.D."/>
            <person name="Hunkapiller M.W."/>
            <person name="Myers E.W."/>
            <person name="Venter J.C."/>
        </authorList>
    </citation>
    <scope>NUCLEOTIDE SEQUENCE [LARGE SCALE GENOMIC DNA]</scope>
</reference>
<reference key="5">
    <citation type="journal article" date="2004" name="Genome Res.">
        <title>The status, quality, and expansion of the NIH full-length cDNA project: the Mammalian Gene Collection (MGC).</title>
        <authorList>
            <consortium name="The MGC Project Team"/>
        </authorList>
    </citation>
    <scope>NUCLEOTIDE SEQUENCE [LARGE SCALE MRNA]</scope>
    <scope>VARIANT SER-54</scope>
    <source>
        <tissue>Brain</tissue>
        <tissue>Uterus</tissue>
    </source>
</reference>
<reference key="6">
    <citation type="journal article" date="2010" name="Cell">
        <title>Quantitative interaction proteomics and genome-wide profiling of epigenetic histone marks and their readers.</title>
        <authorList>
            <person name="Vermeulen M."/>
            <person name="Eberl H.C."/>
            <person name="Matarese F."/>
            <person name="Marks H."/>
            <person name="Denissov S."/>
            <person name="Butter F."/>
            <person name="Lee K.K."/>
            <person name="Olsen J.V."/>
            <person name="Hyman A.A."/>
            <person name="Stunnenberg H.G."/>
            <person name="Mann M."/>
        </authorList>
    </citation>
    <scope>IDENTIFICATION IN SOME CHROMATIN COMPLEX</scope>
    <scope>FUNCTION</scope>
</reference>
<reference key="7">
    <citation type="journal article" date="2011" name="Circ. Cardiovasc. Genet.">
        <title>Homozygosity mapping and exome sequencing reveal GATAD1 mutation in autosomal recessive dilated cardiomyopathy.</title>
        <authorList>
            <person name="Theis J.L."/>
            <person name="Sharpe K.M."/>
            <person name="Matsumoto M.E."/>
            <person name="Chai H.S."/>
            <person name="Nair A.A."/>
            <person name="Theis J.D."/>
            <person name="de Andrade M."/>
            <person name="Wieben E.D."/>
            <person name="Michels V.V."/>
            <person name="Olson T.M."/>
        </authorList>
    </citation>
    <scope>SUBCELLULAR LOCATION</scope>
    <scope>TISSUE SPECIFICITY</scope>
    <scope>VARIANT CMD2B PRO-102</scope>
    <scope>VARIANTS SER-54 AND TRP-233</scope>
</reference>
<reference key="8">
    <citation type="journal article" date="2015" name="Mol. Cell. Proteomics">
        <title>System-wide analysis of SUMOylation dynamics in response to replication stress reveals novel small ubiquitin-like modified target proteins and acceptor lysines relevant for genome stability.</title>
        <authorList>
            <person name="Xiao Z."/>
            <person name="Chang J.G."/>
            <person name="Hendriks I.A."/>
            <person name="Sigurdsson J.O."/>
            <person name="Olsen J.V."/>
            <person name="Vertegaal A.C."/>
        </authorList>
    </citation>
    <scope>SUMOYLATION [LARGE SCALE ANALYSIS] AT LYS-262</scope>
    <scope>IDENTIFICATION BY MASS SPECTROMETRY [LARGE SCALE ANALYSIS]</scope>
</reference>
<reference key="9">
    <citation type="journal article" date="2017" name="Nat. Struct. Mol. Biol.">
        <title>Site-specific mapping of the human SUMO proteome reveals co-modification with phosphorylation.</title>
        <authorList>
            <person name="Hendriks I.A."/>
            <person name="Lyon D."/>
            <person name="Young C."/>
            <person name="Jensen L.J."/>
            <person name="Vertegaal A.C."/>
            <person name="Nielsen M.L."/>
        </authorList>
    </citation>
    <scope>SUMOYLATION [LARGE SCALE ANALYSIS] AT LYS-262</scope>
    <scope>IDENTIFICATION BY MASS SPECTROMETRY [LARGE SCALE ANALYSIS]</scope>
</reference>
<organism>
    <name type="scientific">Homo sapiens</name>
    <name type="common">Human</name>
    <dbReference type="NCBI Taxonomy" id="9606"/>
    <lineage>
        <taxon>Eukaryota</taxon>
        <taxon>Metazoa</taxon>
        <taxon>Chordata</taxon>
        <taxon>Craniata</taxon>
        <taxon>Vertebrata</taxon>
        <taxon>Euteleostomi</taxon>
        <taxon>Mammalia</taxon>
        <taxon>Eutheria</taxon>
        <taxon>Euarchontoglires</taxon>
        <taxon>Primates</taxon>
        <taxon>Haplorrhini</taxon>
        <taxon>Catarrhini</taxon>
        <taxon>Hominidae</taxon>
        <taxon>Homo</taxon>
    </lineage>
</organism>
<dbReference type="EMBL" id="AK026142">
    <property type="protein sequence ID" value="BAB15374.1"/>
    <property type="molecule type" value="mRNA"/>
</dbReference>
<dbReference type="EMBL" id="AK315788">
    <property type="protein sequence ID" value="BAG38134.1"/>
    <property type="molecule type" value="mRNA"/>
</dbReference>
<dbReference type="EMBL" id="AC000064">
    <property type="protein sequence ID" value="AAB46345.1"/>
    <property type="status" value="ALT_SEQ"/>
    <property type="molecule type" value="Genomic_DNA"/>
</dbReference>
<dbReference type="EMBL" id="CH236949">
    <property type="protein sequence ID" value="EAL24150.1"/>
    <property type="molecule type" value="Genomic_DNA"/>
</dbReference>
<dbReference type="EMBL" id="CH471091">
    <property type="protein sequence ID" value="EAW76850.1"/>
    <property type="molecule type" value="Genomic_DNA"/>
</dbReference>
<dbReference type="EMBL" id="CH471091">
    <property type="protein sequence ID" value="EAW76851.1"/>
    <property type="molecule type" value="Genomic_DNA"/>
</dbReference>
<dbReference type="EMBL" id="BC019350">
    <property type="protein sequence ID" value="AAH19350.1"/>
    <property type="molecule type" value="mRNA"/>
</dbReference>
<dbReference type="EMBL" id="BC031091">
    <property type="protein sequence ID" value="AAH31091.1"/>
    <property type="molecule type" value="mRNA"/>
</dbReference>
<dbReference type="CCDS" id="CCDS5625.1"/>
<dbReference type="RefSeq" id="NP_066990.3">
    <property type="nucleotide sequence ID" value="NM_021167.4"/>
</dbReference>
<dbReference type="PDB" id="8Q1S">
    <property type="method" value="X-ray"/>
    <property type="resolution" value="3.23 A"/>
    <property type="chains" value="C/P=95-109"/>
</dbReference>
<dbReference type="PDBsum" id="8Q1S"/>
<dbReference type="SMR" id="Q8WUU5"/>
<dbReference type="BioGRID" id="121770">
    <property type="interactions" value="133"/>
</dbReference>
<dbReference type="FunCoup" id="Q8WUU5">
    <property type="interactions" value="3219"/>
</dbReference>
<dbReference type="IntAct" id="Q8WUU5">
    <property type="interactions" value="51"/>
</dbReference>
<dbReference type="MINT" id="Q8WUU5"/>
<dbReference type="STRING" id="9606.ENSP00000287957"/>
<dbReference type="GlyGen" id="Q8WUU5">
    <property type="glycosylation" value="4 sites, 1 O-linked glycan (1 site)"/>
</dbReference>
<dbReference type="iPTMnet" id="Q8WUU5"/>
<dbReference type="PhosphoSitePlus" id="Q8WUU5"/>
<dbReference type="BioMuta" id="GATAD1"/>
<dbReference type="DMDM" id="74730762"/>
<dbReference type="jPOST" id="Q8WUU5"/>
<dbReference type="MassIVE" id="Q8WUU5"/>
<dbReference type="PaxDb" id="9606-ENSP00000287957"/>
<dbReference type="PeptideAtlas" id="Q8WUU5"/>
<dbReference type="ProteomicsDB" id="74711"/>
<dbReference type="Pumba" id="Q8WUU5"/>
<dbReference type="Antibodypedia" id="1808">
    <property type="antibodies" value="207 antibodies from 22 providers"/>
</dbReference>
<dbReference type="DNASU" id="57798"/>
<dbReference type="Ensembl" id="ENST00000287957.5">
    <property type="protein sequence ID" value="ENSP00000287957.3"/>
    <property type="gene ID" value="ENSG00000157259.8"/>
</dbReference>
<dbReference type="GeneID" id="57798"/>
<dbReference type="KEGG" id="hsa:57798"/>
<dbReference type="MANE-Select" id="ENST00000287957.5">
    <property type="protein sequence ID" value="ENSP00000287957.3"/>
    <property type="RefSeq nucleotide sequence ID" value="NM_021167.5"/>
    <property type="RefSeq protein sequence ID" value="NP_066990.3"/>
</dbReference>
<dbReference type="UCSC" id="uc003ulx.3">
    <property type="organism name" value="human"/>
</dbReference>
<dbReference type="AGR" id="HGNC:29941"/>
<dbReference type="CTD" id="57798"/>
<dbReference type="DisGeNET" id="57798"/>
<dbReference type="GeneCards" id="GATAD1"/>
<dbReference type="HGNC" id="HGNC:29941">
    <property type="gene designation" value="GATAD1"/>
</dbReference>
<dbReference type="HPA" id="ENSG00000157259">
    <property type="expression patterns" value="Low tissue specificity"/>
</dbReference>
<dbReference type="MalaCards" id="GATAD1"/>
<dbReference type="MIM" id="614518">
    <property type="type" value="gene"/>
</dbReference>
<dbReference type="MIM" id="614672">
    <property type="type" value="phenotype"/>
</dbReference>
<dbReference type="neXtProt" id="NX_Q8WUU5"/>
<dbReference type="OpenTargets" id="ENSG00000157259"/>
<dbReference type="Orphanet" id="154">
    <property type="disease" value="Familial isolated dilated cardiomyopathy"/>
</dbReference>
<dbReference type="PharmGKB" id="PA142671745"/>
<dbReference type="VEuPathDB" id="HostDB:ENSG00000157259"/>
<dbReference type="eggNOG" id="ENOG502QUY5">
    <property type="taxonomic scope" value="Eukaryota"/>
</dbReference>
<dbReference type="GeneTree" id="ENSGT00390000018554"/>
<dbReference type="HOGENOM" id="CLU_070432_0_0_1"/>
<dbReference type="InParanoid" id="Q8WUU5"/>
<dbReference type="OMA" id="LLTDQYC"/>
<dbReference type="OrthoDB" id="9994231at2759"/>
<dbReference type="PAN-GO" id="Q8WUU5">
    <property type="GO annotations" value="2 GO annotations based on evolutionary models"/>
</dbReference>
<dbReference type="PhylomeDB" id="Q8WUU5"/>
<dbReference type="TreeFam" id="TF325354"/>
<dbReference type="PathwayCommons" id="Q8WUU5"/>
<dbReference type="SignaLink" id="Q8WUU5"/>
<dbReference type="BioGRID-ORCS" id="57798">
    <property type="hits" value="34 hits in 1158 CRISPR screens"/>
</dbReference>
<dbReference type="GenomeRNAi" id="57798"/>
<dbReference type="Pharos" id="Q8WUU5">
    <property type="development level" value="Tbio"/>
</dbReference>
<dbReference type="PRO" id="PR:Q8WUU5"/>
<dbReference type="Proteomes" id="UP000005640">
    <property type="component" value="Chromosome 7"/>
</dbReference>
<dbReference type="RNAct" id="Q8WUU5">
    <property type="molecule type" value="protein"/>
</dbReference>
<dbReference type="Bgee" id="ENSG00000157259">
    <property type="expression patterns" value="Expressed in left ovary and 200 other cell types or tissues"/>
</dbReference>
<dbReference type="ExpressionAtlas" id="Q8WUU5">
    <property type="expression patterns" value="baseline and differential"/>
</dbReference>
<dbReference type="GO" id="GO:0005654">
    <property type="term" value="C:nucleoplasm"/>
    <property type="evidence" value="ECO:0000314"/>
    <property type="project" value="HPA"/>
</dbReference>
<dbReference type="GO" id="GO:0005634">
    <property type="term" value="C:nucleus"/>
    <property type="evidence" value="ECO:0000314"/>
    <property type="project" value="UniProtKB"/>
</dbReference>
<dbReference type="GO" id="GO:0043565">
    <property type="term" value="F:sequence-specific DNA binding"/>
    <property type="evidence" value="ECO:0007669"/>
    <property type="project" value="InterPro"/>
</dbReference>
<dbReference type="GO" id="GO:0008270">
    <property type="term" value="F:zinc ion binding"/>
    <property type="evidence" value="ECO:0007669"/>
    <property type="project" value="UniProtKB-KW"/>
</dbReference>
<dbReference type="GO" id="GO:0006325">
    <property type="term" value="P:chromatin organization"/>
    <property type="evidence" value="ECO:0000318"/>
    <property type="project" value="GO_Central"/>
</dbReference>
<dbReference type="GO" id="GO:0006338">
    <property type="term" value="P:chromatin remodeling"/>
    <property type="evidence" value="ECO:0000314"/>
    <property type="project" value="GO_Central"/>
</dbReference>
<dbReference type="GO" id="GO:0006355">
    <property type="term" value="P:regulation of DNA-templated transcription"/>
    <property type="evidence" value="ECO:0007669"/>
    <property type="project" value="InterPro"/>
</dbReference>
<dbReference type="FunFam" id="3.30.50.10:FF:000048">
    <property type="entry name" value="GATA zinc finger domain-containing protein 1"/>
    <property type="match status" value="1"/>
</dbReference>
<dbReference type="Gene3D" id="3.30.50.10">
    <property type="entry name" value="Erythroid Transcription Factor GATA-1, subunit A"/>
    <property type="match status" value="1"/>
</dbReference>
<dbReference type="InterPro" id="IPR039050">
    <property type="entry name" value="GATAD1"/>
</dbReference>
<dbReference type="InterPro" id="IPR000679">
    <property type="entry name" value="Znf_GATA"/>
</dbReference>
<dbReference type="InterPro" id="IPR013088">
    <property type="entry name" value="Znf_NHR/GATA"/>
</dbReference>
<dbReference type="PANTHER" id="PTHR13340">
    <property type="entry name" value="GATA ZINC FINGER DOMAIN-CONTAINING"/>
    <property type="match status" value="1"/>
</dbReference>
<dbReference type="PANTHER" id="PTHR13340:SF2">
    <property type="entry name" value="GATA ZINC FINGER DOMAIN-CONTAINING PROTEIN 1"/>
    <property type="match status" value="1"/>
</dbReference>
<dbReference type="SUPFAM" id="SSF57716">
    <property type="entry name" value="Glucocorticoid receptor-like (DNA-binding domain)"/>
    <property type="match status" value="1"/>
</dbReference>
<dbReference type="PROSITE" id="PS50114">
    <property type="entry name" value="GATA_ZN_FINGER_2"/>
    <property type="match status" value="1"/>
</dbReference>
<sequence>MPLGLKPTCSVCKTTSSSMWKKGAQGEILCHHCTGRGGAGSGGAGSGAAGGTGGSGGGGFGAATFASTSATPPQSNGGGGGKQSKQEIHRRSARLRNTKYKSAPAAEKKVSTKGKGRRHIFKLKNPIKAPESVSTIITAESIFYKGVYYQIGDVVSVIDEQDGKPYYAQIRGFIQDQYCEKSAALTWLIPTLSSPRDQFDPASYIIGPEEDLPRKMEYLEFVCHAPSEYFKSRSSPFPTVPTRPEKGYIWTHVGPTPAITIKESVANHL</sequence>
<comment type="function">
    <text evidence="4">Component of some chromatin complex recruited to chromatin sites methylated 'Lys-4' of histone H3 (H3K4me), with a preference for trimethylated form (H3K4me3).</text>
</comment>
<comment type="subunit">
    <text evidence="4">Component of a chromatin complex, at least composed of KDM5A, GATAD1 and EMSY.</text>
</comment>
<comment type="subcellular location">
    <subcellularLocation>
        <location evidence="5">Nucleus</location>
    </subcellularLocation>
</comment>
<comment type="tissue specificity">
    <text evidence="5">Ubiquitously expressed among various tissue types. Expressed in left ventricular myocytes.</text>
</comment>
<comment type="disease" evidence="5">
    <disease id="DI-03469">
        <name>Cardiomyopathy, dilated, 2B</name>
        <acronym>CMD2B</acronym>
        <description>A disorder characterized by ventricular dilation and impaired systolic function, resulting in congestive heart failure and arrhythmia. Patients are at risk of premature death.</description>
        <dbReference type="MIM" id="614672"/>
    </disease>
    <text>The disease is caused by variants affecting the gene represented in this entry.</text>
</comment>
<comment type="sequence caution" evidence="6">
    <conflict type="erroneous gene model prediction">
        <sequence resource="EMBL-CDS" id="AAB46345"/>
    </conflict>
</comment>
<protein>
    <recommendedName>
        <fullName>GATA zinc finger domain-containing protein 1</fullName>
    </recommendedName>
    <alternativeName>
        <fullName>Ocular development-associated gene protein</fullName>
    </alternativeName>
</protein>
<feature type="chain" id="PRO_0000288909" description="GATA zinc finger domain-containing protein 1">
    <location>
        <begin position="1"/>
        <end position="269"/>
    </location>
</feature>
<feature type="zinc finger region" description="GATA-type" evidence="1">
    <location>
        <begin position="9"/>
        <end position="33"/>
    </location>
</feature>
<feature type="region of interest" description="Disordered" evidence="2">
    <location>
        <begin position="63"/>
        <end position="115"/>
    </location>
</feature>
<feature type="cross-link" description="Glycyl lysine isopeptide (Lys-Gly) (interchain with G-Cter in SUMO2)" evidence="7 8">
    <location>
        <position position="262"/>
    </location>
</feature>
<feature type="sequence variant" id="VAR_032533" description="In dbSNP:rs10281879." evidence="3 5">
    <original>G</original>
    <variation>S</variation>
    <location>
        <position position="54"/>
    </location>
</feature>
<feature type="sequence variant" id="VAR_068556" description="In CMD2B; dbSNP:rs387907188." evidence="5">
    <original>S</original>
    <variation>P</variation>
    <location>
        <position position="102"/>
    </location>
</feature>
<feature type="sequence variant" id="VAR_068557" description="In dbSNP:rs34768413." evidence="5">
    <original>R</original>
    <variation>W</variation>
    <location>
        <position position="233"/>
    </location>
</feature>
<feature type="sequence conflict" description="In Ref. 1; BAB15374." evidence="6" ref="1">
    <original>P</original>
    <variation>S</variation>
    <location>
        <position position="255"/>
    </location>
</feature>
<name>GATD1_HUMAN</name>
<evidence type="ECO:0000255" key="1">
    <source>
        <dbReference type="PROSITE-ProRule" id="PRU00094"/>
    </source>
</evidence>
<evidence type="ECO:0000256" key="2">
    <source>
        <dbReference type="SAM" id="MobiDB-lite"/>
    </source>
</evidence>
<evidence type="ECO:0000269" key="3">
    <source>
    </source>
</evidence>
<evidence type="ECO:0000269" key="4">
    <source>
    </source>
</evidence>
<evidence type="ECO:0000269" key="5">
    <source>
    </source>
</evidence>
<evidence type="ECO:0000305" key="6"/>
<evidence type="ECO:0007744" key="7">
    <source>
    </source>
</evidence>
<evidence type="ECO:0007744" key="8">
    <source>
    </source>
</evidence>
<gene>
    <name type="primary">GATAD1</name>
    <name type="synonym">ODAG</name>
</gene>
<accession>Q8WUU5</accession>
<accession>B2RE37</accession>
<accession>D6W5Q5</accession>
<accession>Q8N5Y5</accession>
<accession>Q99995</accession>
<accession>Q9H689</accession>